<protein>
    <recommendedName>
        <fullName evidence="1">RNA polymerase-associated protein RapA</fullName>
        <ecNumber evidence="1">3.6.4.-</ecNumber>
    </recommendedName>
    <alternativeName>
        <fullName evidence="1">ATP-dependent helicase HepA</fullName>
    </alternativeName>
</protein>
<sequence length="969" mass="109440">MSFALGQRWISDTESDLGLGTVVALDARTVTLMFAASEENRVYARSDAPVTRVIFNVGDVVDSQQGWSLQVEQVVEDQGVYTYLGTRVDTEESGVALREIFLSNQIRFNKPQDKLFAGQIDRMDNFVLRYRALTNQYQQHKSPMRGLCGMRAGLIPHQLYIAHEVGRRHAPRVLLADEVGLGKTIEAGMIIHQQVLTGRAERILIVVPETLQHQWLVEMMRRFNLHFSIFDEERCVEAFSEADNPFETQQYVLCSLDFLRKSRQRFEQALEAEWDLLVVDEAHHLEWHPEKPSREYQVIEALAEQTPGVLLLTATPEQLGRESHFARLRLLDADRFYDYEAFVKEEEQYAPVADAVTALFSGEKLSDEAKNKITELLSEQDVEPLFKALESHASEDEIALARQELIDNLMDRHGTGRVLFRNTRAAIKGFPVRNVHLLPLEIPSQYTTSMRVAGMLGGKLTPEARAMKMLYPEEIFQEFEGEESSWWQFDSRVNWLLEKVKAKRSEKILVIASRASTALQLEQALREREGIRATVFHEGMSIIERDKAAAYFAQEEGGAQVLICSEIGSEGRNFQFANQLVMFDLPFNPDLLEQRIGRLDRIGQKRDIDVYVPYLTETSQAILARWFQEGLNAFAETCPTGRAVYDAFAERLIPILAAGGGEELEVIIEESAKLNKTLKSQLEVGRDRLLEMHSNGGEKAQQIAEQIAKTDGDTNLVTFALSLFDAIGLHQEDRGENALVVTPAEHMMVPSYPGLPYEGATITFDRDTALSREDMHFISWEHPMVQGGIDLLMSEGVGTCAVSLLKNKALPVGTILLELVYVVDAQAPKRSGISRFLPVSPIRILMDARGNDLSSQVEFESFNRQLSPVNRHLASKLVSSVQHDVHRLITASETAVEPRVSAIREQAQRDMQQSLNSELERLLALKAVNPNIRDEEIEVLDQQIKELTGYIAQAQYQLDSLRLIVVAHN</sequence>
<proteinExistence type="inferred from homology"/>
<dbReference type="EC" id="3.6.4.-" evidence="1"/>
<dbReference type="EMBL" id="AE003852">
    <property type="protein sequence ID" value="AAF95648.1"/>
    <property type="molecule type" value="Genomic_DNA"/>
</dbReference>
<dbReference type="PIR" id="H82068">
    <property type="entry name" value="H82068"/>
</dbReference>
<dbReference type="RefSeq" id="NP_232135.1">
    <property type="nucleotide sequence ID" value="NC_002505.1"/>
</dbReference>
<dbReference type="RefSeq" id="WP_000006492.1">
    <property type="nucleotide sequence ID" value="NZ_LT906614.1"/>
</dbReference>
<dbReference type="SMR" id="Q9KP70"/>
<dbReference type="STRING" id="243277.VC_2506"/>
<dbReference type="DNASU" id="2615170"/>
<dbReference type="EnsemblBacteria" id="AAF95648">
    <property type="protein sequence ID" value="AAF95648"/>
    <property type="gene ID" value="VC_2506"/>
</dbReference>
<dbReference type="KEGG" id="vch:VC_2506"/>
<dbReference type="PATRIC" id="fig|243277.26.peg.2387"/>
<dbReference type="eggNOG" id="COG0553">
    <property type="taxonomic scope" value="Bacteria"/>
</dbReference>
<dbReference type="HOGENOM" id="CLU_011520_0_0_6"/>
<dbReference type="Proteomes" id="UP000000584">
    <property type="component" value="Chromosome 1"/>
</dbReference>
<dbReference type="GO" id="GO:0005524">
    <property type="term" value="F:ATP binding"/>
    <property type="evidence" value="ECO:0007669"/>
    <property type="project" value="UniProtKB-UniRule"/>
</dbReference>
<dbReference type="GO" id="GO:0003677">
    <property type="term" value="F:DNA binding"/>
    <property type="evidence" value="ECO:0007669"/>
    <property type="project" value="UniProtKB-KW"/>
</dbReference>
<dbReference type="GO" id="GO:0004386">
    <property type="term" value="F:helicase activity"/>
    <property type="evidence" value="ECO:0007669"/>
    <property type="project" value="UniProtKB-UniRule"/>
</dbReference>
<dbReference type="GO" id="GO:0016817">
    <property type="term" value="F:hydrolase activity, acting on acid anhydrides"/>
    <property type="evidence" value="ECO:0007669"/>
    <property type="project" value="InterPro"/>
</dbReference>
<dbReference type="GO" id="GO:0006281">
    <property type="term" value="P:DNA repair"/>
    <property type="evidence" value="ECO:0000318"/>
    <property type="project" value="GO_Central"/>
</dbReference>
<dbReference type="GO" id="GO:0006355">
    <property type="term" value="P:regulation of DNA-templated transcription"/>
    <property type="evidence" value="ECO:0007669"/>
    <property type="project" value="UniProtKB-UniRule"/>
</dbReference>
<dbReference type="CDD" id="cd18011">
    <property type="entry name" value="DEXDc_RapA"/>
    <property type="match status" value="1"/>
</dbReference>
<dbReference type="CDD" id="cd18793">
    <property type="entry name" value="SF2_C_SNF"/>
    <property type="match status" value="1"/>
</dbReference>
<dbReference type="FunFam" id="3.40.50.10810:FF:000012">
    <property type="entry name" value="RNA polymerase-associated protein RapA"/>
    <property type="match status" value="1"/>
</dbReference>
<dbReference type="Gene3D" id="2.30.30.140">
    <property type="match status" value="1"/>
</dbReference>
<dbReference type="Gene3D" id="2.30.30.930">
    <property type="match status" value="1"/>
</dbReference>
<dbReference type="Gene3D" id="3.30.360.80">
    <property type="match status" value="1"/>
</dbReference>
<dbReference type="Gene3D" id="6.10.140.1500">
    <property type="match status" value="1"/>
</dbReference>
<dbReference type="Gene3D" id="6.10.140.2230">
    <property type="match status" value="1"/>
</dbReference>
<dbReference type="Gene3D" id="3.40.50.300">
    <property type="entry name" value="P-loop containing nucleotide triphosphate hydrolases"/>
    <property type="match status" value="1"/>
</dbReference>
<dbReference type="Gene3D" id="3.40.50.10810">
    <property type="entry name" value="Tandem AAA-ATPase domain"/>
    <property type="match status" value="1"/>
</dbReference>
<dbReference type="HAMAP" id="MF_01821">
    <property type="entry name" value="Helicase_RapA"/>
    <property type="match status" value="1"/>
</dbReference>
<dbReference type="InterPro" id="IPR014001">
    <property type="entry name" value="Helicase_ATP-bd"/>
</dbReference>
<dbReference type="InterPro" id="IPR001650">
    <property type="entry name" value="Helicase_C-like"/>
</dbReference>
<dbReference type="InterPro" id="IPR023949">
    <property type="entry name" value="Helicase_RapA"/>
</dbReference>
<dbReference type="InterPro" id="IPR027417">
    <property type="entry name" value="P-loop_NTPase"/>
</dbReference>
<dbReference type="InterPro" id="IPR022737">
    <property type="entry name" value="RapA_C"/>
</dbReference>
<dbReference type="InterPro" id="IPR038718">
    <property type="entry name" value="SNF2-like_sf"/>
</dbReference>
<dbReference type="InterPro" id="IPR049730">
    <property type="entry name" value="SNF2/RAD54-like_C"/>
</dbReference>
<dbReference type="InterPro" id="IPR000330">
    <property type="entry name" value="SNF2_N"/>
</dbReference>
<dbReference type="InterPro" id="IPR040765">
    <property type="entry name" value="Tudor_1_RapA"/>
</dbReference>
<dbReference type="InterPro" id="IPR040766">
    <property type="entry name" value="Tudor_2_RapA"/>
</dbReference>
<dbReference type="NCBIfam" id="NF003426">
    <property type="entry name" value="PRK04914.1"/>
    <property type="match status" value="1"/>
</dbReference>
<dbReference type="PANTHER" id="PTHR45766">
    <property type="entry name" value="DNA ANNEALING HELICASE AND ENDONUCLEASE ZRANB3 FAMILY MEMBER"/>
    <property type="match status" value="1"/>
</dbReference>
<dbReference type="PANTHER" id="PTHR45766:SF6">
    <property type="entry name" value="SWI_SNF-RELATED MATRIX-ASSOCIATED ACTIN-DEPENDENT REGULATOR OF CHROMATIN SUBFAMILY A-LIKE PROTEIN 1"/>
    <property type="match status" value="1"/>
</dbReference>
<dbReference type="Pfam" id="PF00271">
    <property type="entry name" value="Helicase_C"/>
    <property type="match status" value="1"/>
</dbReference>
<dbReference type="Pfam" id="PF12137">
    <property type="entry name" value="RapA_C"/>
    <property type="match status" value="1"/>
</dbReference>
<dbReference type="Pfam" id="PF00176">
    <property type="entry name" value="SNF2-rel_dom"/>
    <property type="match status" value="1"/>
</dbReference>
<dbReference type="Pfam" id="PF18339">
    <property type="entry name" value="Tudor_1_RapA"/>
    <property type="match status" value="1"/>
</dbReference>
<dbReference type="Pfam" id="PF18337">
    <property type="entry name" value="Tudor_RapA"/>
    <property type="match status" value="1"/>
</dbReference>
<dbReference type="SMART" id="SM00487">
    <property type="entry name" value="DEXDc"/>
    <property type="match status" value="1"/>
</dbReference>
<dbReference type="SMART" id="SM00490">
    <property type="entry name" value="HELICc"/>
    <property type="match status" value="1"/>
</dbReference>
<dbReference type="SUPFAM" id="SSF52540">
    <property type="entry name" value="P-loop containing nucleoside triphosphate hydrolases"/>
    <property type="match status" value="2"/>
</dbReference>
<dbReference type="PROSITE" id="PS51192">
    <property type="entry name" value="HELICASE_ATP_BIND_1"/>
    <property type="match status" value="1"/>
</dbReference>
<dbReference type="PROSITE" id="PS51194">
    <property type="entry name" value="HELICASE_CTER"/>
    <property type="match status" value="1"/>
</dbReference>
<organism>
    <name type="scientific">Vibrio cholerae serotype O1 (strain ATCC 39315 / El Tor Inaba N16961)</name>
    <dbReference type="NCBI Taxonomy" id="243277"/>
    <lineage>
        <taxon>Bacteria</taxon>
        <taxon>Pseudomonadati</taxon>
        <taxon>Pseudomonadota</taxon>
        <taxon>Gammaproteobacteria</taxon>
        <taxon>Vibrionales</taxon>
        <taxon>Vibrionaceae</taxon>
        <taxon>Vibrio</taxon>
    </lineage>
</organism>
<accession>Q9KP70</accession>
<name>RAPA_VIBCH</name>
<comment type="function">
    <text evidence="1">Transcription regulator that activates transcription by stimulating RNA polymerase (RNAP) recycling in case of stress conditions such as supercoiled DNA or high salt concentrations. Probably acts by releasing the RNAP, when it is trapped or immobilized on tightly supercoiled DNA. Does not activate transcription on linear DNA. Probably not involved in DNA repair.</text>
</comment>
<comment type="subunit">
    <text evidence="1">Interacts with the RNAP. Has a higher affinity for the core RNAP than for the holoenzyme. Its ATPase activity is stimulated by binding to RNAP.</text>
</comment>
<comment type="similarity">
    <text evidence="1">Belongs to the SNF2/RAD54 helicase family. RapA subfamily.</text>
</comment>
<gene>
    <name evidence="1" type="primary">rapA</name>
    <name type="synonym">hepA</name>
    <name type="ordered locus">VC_2506</name>
</gene>
<reference key="1">
    <citation type="journal article" date="2000" name="Nature">
        <title>DNA sequence of both chromosomes of the cholera pathogen Vibrio cholerae.</title>
        <authorList>
            <person name="Heidelberg J.F."/>
            <person name="Eisen J.A."/>
            <person name="Nelson W.C."/>
            <person name="Clayton R.A."/>
            <person name="Gwinn M.L."/>
            <person name="Dodson R.J."/>
            <person name="Haft D.H."/>
            <person name="Hickey E.K."/>
            <person name="Peterson J.D."/>
            <person name="Umayam L.A."/>
            <person name="Gill S.R."/>
            <person name="Nelson K.E."/>
            <person name="Read T.D."/>
            <person name="Tettelin H."/>
            <person name="Richardson D.L."/>
            <person name="Ermolaeva M.D."/>
            <person name="Vamathevan J.J."/>
            <person name="Bass S."/>
            <person name="Qin H."/>
            <person name="Dragoi I."/>
            <person name="Sellers P."/>
            <person name="McDonald L.A."/>
            <person name="Utterback T.R."/>
            <person name="Fleischmann R.D."/>
            <person name="Nierman W.C."/>
            <person name="White O."/>
            <person name="Salzberg S.L."/>
            <person name="Smith H.O."/>
            <person name="Colwell R.R."/>
            <person name="Mekalanos J.J."/>
            <person name="Venter J.C."/>
            <person name="Fraser C.M."/>
        </authorList>
    </citation>
    <scope>NUCLEOTIDE SEQUENCE [LARGE SCALE GENOMIC DNA]</scope>
    <source>
        <strain>ATCC 39315 / El Tor Inaba N16961</strain>
    </source>
</reference>
<evidence type="ECO:0000255" key="1">
    <source>
        <dbReference type="HAMAP-Rule" id="MF_01821"/>
    </source>
</evidence>
<keyword id="KW-0010">Activator</keyword>
<keyword id="KW-0067">ATP-binding</keyword>
<keyword id="KW-0238">DNA-binding</keyword>
<keyword id="KW-0347">Helicase</keyword>
<keyword id="KW-0378">Hydrolase</keyword>
<keyword id="KW-0547">Nucleotide-binding</keyword>
<keyword id="KW-1185">Reference proteome</keyword>
<keyword id="KW-0804">Transcription</keyword>
<keyword id="KW-0805">Transcription regulation</keyword>
<feature type="chain" id="PRO_0000207188" description="RNA polymerase-associated protein RapA">
    <location>
        <begin position="1"/>
        <end position="969"/>
    </location>
</feature>
<feature type="domain" description="Helicase ATP-binding" evidence="1">
    <location>
        <begin position="164"/>
        <end position="334"/>
    </location>
</feature>
<feature type="domain" description="Helicase C-terminal" evidence="1">
    <location>
        <begin position="492"/>
        <end position="646"/>
    </location>
</feature>
<feature type="short sequence motif" description="DEAH box">
    <location>
        <begin position="280"/>
        <end position="283"/>
    </location>
</feature>
<feature type="binding site" evidence="1">
    <location>
        <begin position="177"/>
        <end position="184"/>
    </location>
    <ligand>
        <name>ATP</name>
        <dbReference type="ChEBI" id="CHEBI:30616"/>
    </ligand>
</feature>